<gene>
    <name evidence="2" type="primary">cysJ</name>
    <name type="ordered locus">SF2780</name>
    <name type="ordered locus">S2973</name>
</gene>
<sequence>MTTQVPPSALLPLNPEQLARLQAATTDLTPTQLAWVSGYFWGVLNQQPVALAVTPAPAAEMPGITIISASQTGNARRVAEALRDDLLAAKLNVKLVNAGDYKFKQIASEKLLIVVTSTQGEGEPPEEAVALHKFLFSKKAPKLENTAFAVFSLGDSSYEFFCQSGKDFDSKLAELGGERLLDRVDSDVEYQAAASEWRARVVDALKSRAPVAAPSQSVATGAVNEIHTSPYSKDAPLVASLSVNQKITGRNSEKDVRHIEIDLGDSGLRYQPGDALGVWYQNDPALVKELVELLWLTGDEPVTVEGKTLPLNEALQWHFELTVNTANIVENYATLTRSETLLPLVGDKAKLQHYAATTLIVDMVRFSPAQLDAEALINLLRPLTPRLYSIASSQAEVENEVHVTVGVVRYDVEGRARAGGASSFLADRVEEEGEVRVFIEHNDNFRLPANLETPVIMIGPGTGIAPFRAFMQQRAADEAPGKNWLFFGNPHFTEDFLYQVEWQRYVKEGVLTRIDLAWSRDQKEKVYVQDKLREQGAELWRWINDGAHIYVCGDANRMAKDVEQALLEVIAEFGGMDTEAADEFLSELRVERRYQRDVY</sequence>
<keyword id="KW-0028">Amino-acid biosynthesis</keyword>
<keyword id="KW-0198">Cysteine biosynthesis</keyword>
<keyword id="KW-0249">Electron transport</keyword>
<keyword id="KW-0274">FAD</keyword>
<keyword id="KW-0285">Flavoprotein</keyword>
<keyword id="KW-0288">FMN</keyword>
<keyword id="KW-0521">NADP</keyword>
<keyword id="KW-0560">Oxidoreductase</keyword>
<keyword id="KW-1185">Reference proteome</keyword>
<keyword id="KW-0813">Transport</keyword>
<proteinExistence type="inferred from homology"/>
<reference key="1">
    <citation type="journal article" date="2002" name="Nucleic Acids Res.">
        <title>Genome sequence of Shigella flexneri 2a: insights into pathogenicity through comparison with genomes of Escherichia coli K12 and O157.</title>
        <authorList>
            <person name="Jin Q."/>
            <person name="Yuan Z."/>
            <person name="Xu J."/>
            <person name="Wang Y."/>
            <person name="Shen Y."/>
            <person name="Lu W."/>
            <person name="Wang J."/>
            <person name="Liu H."/>
            <person name="Yang J."/>
            <person name="Yang F."/>
            <person name="Zhang X."/>
            <person name="Zhang J."/>
            <person name="Yang G."/>
            <person name="Wu H."/>
            <person name="Qu D."/>
            <person name="Dong J."/>
            <person name="Sun L."/>
            <person name="Xue Y."/>
            <person name="Zhao A."/>
            <person name="Gao Y."/>
            <person name="Zhu J."/>
            <person name="Kan B."/>
            <person name="Ding K."/>
            <person name="Chen S."/>
            <person name="Cheng H."/>
            <person name="Yao Z."/>
            <person name="He B."/>
            <person name="Chen R."/>
            <person name="Ma D."/>
            <person name="Qiang B."/>
            <person name="Wen Y."/>
            <person name="Hou Y."/>
            <person name="Yu J."/>
        </authorList>
    </citation>
    <scope>NUCLEOTIDE SEQUENCE [LARGE SCALE GENOMIC DNA]</scope>
    <source>
        <strain>301 / Serotype 2a</strain>
    </source>
</reference>
<reference key="2">
    <citation type="journal article" date="2003" name="Infect. Immun.">
        <title>Complete genome sequence and comparative genomics of Shigella flexneri serotype 2a strain 2457T.</title>
        <authorList>
            <person name="Wei J."/>
            <person name="Goldberg M.B."/>
            <person name="Burland V."/>
            <person name="Venkatesan M.M."/>
            <person name="Deng W."/>
            <person name="Fournier G."/>
            <person name="Mayhew G.F."/>
            <person name="Plunkett G. III"/>
            <person name="Rose D.J."/>
            <person name="Darling A."/>
            <person name="Mau B."/>
            <person name="Perna N.T."/>
            <person name="Payne S.M."/>
            <person name="Runyen-Janecky L.J."/>
            <person name="Zhou S."/>
            <person name="Schwartz D.C."/>
            <person name="Blattner F.R."/>
        </authorList>
    </citation>
    <scope>NUCLEOTIDE SEQUENCE [LARGE SCALE GENOMIC DNA]</scope>
    <source>
        <strain>ATCC 700930 / 2457T / Serotype 2a</strain>
    </source>
</reference>
<feature type="initiator methionine" description="Removed" evidence="1">
    <location>
        <position position="1"/>
    </location>
</feature>
<feature type="chain" id="PRO_0000199937" description="Sulfite reductase [NADPH] flavoprotein alpha-component">
    <location>
        <begin position="2"/>
        <end position="599"/>
    </location>
</feature>
<feature type="domain" description="Flavodoxin-like" evidence="2">
    <location>
        <begin position="64"/>
        <end position="202"/>
    </location>
</feature>
<feature type="domain" description="FAD-binding FR-type" evidence="2">
    <location>
        <begin position="234"/>
        <end position="448"/>
    </location>
</feature>
<feature type="binding site" evidence="2">
    <location>
        <begin position="70"/>
        <end position="75"/>
    </location>
    <ligand>
        <name>FMN</name>
        <dbReference type="ChEBI" id="CHEBI:58210"/>
    </ligand>
</feature>
<feature type="binding site" evidence="2">
    <location>
        <begin position="117"/>
        <end position="120"/>
    </location>
    <ligand>
        <name>FMN</name>
        <dbReference type="ChEBI" id="CHEBI:58210"/>
    </ligand>
</feature>
<feature type="binding site" evidence="2">
    <location>
        <begin position="153"/>
        <end position="162"/>
    </location>
    <ligand>
        <name>FMN</name>
        <dbReference type="ChEBI" id="CHEBI:58210"/>
    </ligand>
</feature>
<feature type="binding site" evidence="2">
    <location>
        <position position="322"/>
    </location>
    <ligand>
        <name>FAD</name>
        <dbReference type="ChEBI" id="CHEBI:57692"/>
    </ligand>
</feature>
<feature type="binding site" evidence="2">
    <location>
        <position position="356"/>
    </location>
    <ligand>
        <name>FAD</name>
        <dbReference type="ChEBI" id="CHEBI:57692"/>
    </ligand>
</feature>
<feature type="binding site" evidence="2">
    <location>
        <begin position="386"/>
        <end position="389"/>
    </location>
    <ligand>
        <name>FAD</name>
        <dbReference type="ChEBI" id="CHEBI:57692"/>
    </ligand>
</feature>
<feature type="binding site" evidence="2">
    <location>
        <begin position="404"/>
        <end position="406"/>
    </location>
    <ligand>
        <name>FAD</name>
        <dbReference type="ChEBI" id="CHEBI:57692"/>
    </ligand>
</feature>
<feature type="binding site" evidence="2">
    <location>
        <position position="410"/>
    </location>
    <ligand>
        <name>FAD</name>
        <dbReference type="ChEBI" id="CHEBI:57692"/>
    </ligand>
</feature>
<feature type="binding site" evidence="2">
    <location>
        <begin position="419"/>
        <end position="422"/>
    </location>
    <ligand>
        <name>FAD</name>
        <dbReference type="ChEBI" id="CHEBI:57692"/>
    </ligand>
</feature>
<feature type="binding site" evidence="2">
    <location>
        <begin position="519"/>
        <end position="520"/>
    </location>
    <ligand>
        <name>NADP(+)</name>
        <dbReference type="ChEBI" id="CHEBI:58349"/>
    </ligand>
</feature>
<feature type="binding site" evidence="2">
    <location>
        <begin position="525"/>
        <end position="529"/>
    </location>
    <ligand>
        <name>NADP(+)</name>
        <dbReference type="ChEBI" id="CHEBI:58349"/>
    </ligand>
</feature>
<feature type="binding site" evidence="2">
    <location>
        <position position="561"/>
    </location>
    <ligand>
        <name>NADP(+)</name>
        <dbReference type="ChEBI" id="CHEBI:58349"/>
    </ligand>
</feature>
<feature type="binding site" evidence="2">
    <location>
        <position position="599"/>
    </location>
    <ligand>
        <name>FAD</name>
        <dbReference type="ChEBI" id="CHEBI:57692"/>
    </ligand>
</feature>
<protein>
    <recommendedName>
        <fullName evidence="2">Sulfite reductase [NADPH] flavoprotein alpha-component</fullName>
        <shortName evidence="2">SiR-FP</shortName>
        <ecNumber evidence="2">1.8.1.2</ecNumber>
    </recommendedName>
</protein>
<comment type="function">
    <text evidence="2">Component of the sulfite reductase complex that catalyzes the 6-electron reduction of sulfite to sulfide. This is one of several activities required for the biosynthesis of L-cysteine from sulfate. The flavoprotein component catalyzes the electron flow from NADPH -&gt; FAD -&gt; FMN to the hemoprotein component.</text>
</comment>
<comment type="catalytic activity">
    <reaction evidence="2">
        <text>hydrogen sulfide + 3 NADP(+) + 3 H2O = sulfite + 3 NADPH + 4 H(+)</text>
        <dbReference type="Rhea" id="RHEA:13801"/>
        <dbReference type="ChEBI" id="CHEBI:15377"/>
        <dbReference type="ChEBI" id="CHEBI:15378"/>
        <dbReference type="ChEBI" id="CHEBI:17359"/>
        <dbReference type="ChEBI" id="CHEBI:29919"/>
        <dbReference type="ChEBI" id="CHEBI:57783"/>
        <dbReference type="ChEBI" id="CHEBI:58349"/>
        <dbReference type="EC" id="1.8.1.2"/>
    </reaction>
</comment>
<comment type="cofactor">
    <cofactor evidence="2">
        <name>FAD</name>
        <dbReference type="ChEBI" id="CHEBI:57692"/>
    </cofactor>
    <text evidence="2">Binds 1 FAD per subunit.</text>
</comment>
<comment type="cofactor">
    <cofactor evidence="2">
        <name>FMN</name>
        <dbReference type="ChEBI" id="CHEBI:58210"/>
    </cofactor>
    <text evidence="2">Binds 1 FMN per subunit.</text>
</comment>
<comment type="pathway">
    <text evidence="2">Sulfur metabolism; hydrogen sulfide biosynthesis; hydrogen sulfide from sulfite (NADPH route): step 1/1.</text>
</comment>
<comment type="subunit">
    <text evidence="2">Alpha(8)-beta(8). The alpha component is a flavoprotein, the beta component is a hemoprotein.</text>
</comment>
<comment type="similarity">
    <text evidence="2">Belongs to the NADPH-dependent sulphite reductase flavoprotein subunit CysJ family.</text>
</comment>
<comment type="similarity">
    <text evidence="2">In the N-terminal section; belongs to the flavodoxin family.</text>
</comment>
<comment type="similarity">
    <text evidence="2">In the C-terminal section; belongs to the flavoprotein pyridine nucleotide cytochrome reductase family.</text>
</comment>
<organism>
    <name type="scientific">Shigella flexneri</name>
    <dbReference type="NCBI Taxonomy" id="623"/>
    <lineage>
        <taxon>Bacteria</taxon>
        <taxon>Pseudomonadati</taxon>
        <taxon>Pseudomonadota</taxon>
        <taxon>Gammaproteobacteria</taxon>
        <taxon>Enterobacterales</taxon>
        <taxon>Enterobacteriaceae</taxon>
        <taxon>Shigella</taxon>
    </lineage>
</organism>
<name>CYSJ_SHIFL</name>
<dbReference type="EC" id="1.8.1.2" evidence="2"/>
<dbReference type="EMBL" id="AE005674">
    <property type="protein sequence ID" value="AAN44269.1"/>
    <property type="molecule type" value="Genomic_DNA"/>
</dbReference>
<dbReference type="EMBL" id="AE014073">
    <property type="protein sequence ID" value="AAP18094.1"/>
    <property type="molecule type" value="Genomic_DNA"/>
</dbReference>
<dbReference type="RefSeq" id="NP_708562.1">
    <property type="nucleotide sequence ID" value="NC_004337.2"/>
</dbReference>
<dbReference type="RefSeq" id="WP_000211949.1">
    <property type="nucleotide sequence ID" value="NZ_WPGW01000039.1"/>
</dbReference>
<dbReference type="SMR" id="Q83QD9"/>
<dbReference type="STRING" id="198214.SF2780"/>
<dbReference type="PaxDb" id="198214-SF2780"/>
<dbReference type="GeneID" id="1027405"/>
<dbReference type="KEGG" id="sfl:SF2780"/>
<dbReference type="KEGG" id="sfx:S2973"/>
<dbReference type="PATRIC" id="fig|198214.7.peg.3308"/>
<dbReference type="HOGENOM" id="CLU_001570_17_7_6"/>
<dbReference type="UniPathway" id="UPA00140">
    <property type="reaction ID" value="UER00207"/>
</dbReference>
<dbReference type="Proteomes" id="UP000001006">
    <property type="component" value="Chromosome"/>
</dbReference>
<dbReference type="Proteomes" id="UP000002673">
    <property type="component" value="Chromosome"/>
</dbReference>
<dbReference type="GO" id="GO:0005829">
    <property type="term" value="C:cytosol"/>
    <property type="evidence" value="ECO:0007669"/>
    <property type="project" value="TreeGrafter"/>
</dbReference>
<dbReference type="GO" id="GO:0050660">
    <property type="term" value="F:flavin adenine dinucleotide binding"/>
    <property type="evidence" value="ECO:0007669"/>
    <property type="project" value="InterPro"/>
</dbReference>
<dbReference type="GO" id="GO:0010181">
    <property type="term" value="F:FMN binding"/>
    <property type="evidence" value="ECO:0007669"/>
    <property type="project" value="InterPro"/>
</dbReference>
<dbReference type="GO" id="GO:0004783">
    <property type="term" value="F:sulfite reductase (NADPH) activity"/>
    <property type="evidence" value="ECO:0007669"/>
    <property type="project" value="UniProtKB-UniRule"/>
</dbReference>
<dbReference type="GO" id="GO:0019344">
    <property type="term" value="P:cysteine biosynthetic process"/>
    <property type="evidence" value="ECO:0007669"/>
    <property type="project" value="UniProtKB-KW"/>
</dbReference>
<dbReference type="GO" id="GO:0070814">
    <property type="term" value="P:hydrogen sulfide biosynthetic process"/>
    <property type="evidence" value="ECO:0007669"/>
    <property type="project" value="UniProtKB-UniRule"/>
</dbReference>
<dbReference type="GO" id="GO:0000103">
    <property type="term" value="P:sulfate assimilation"/>
    <property type="evidence" value="ECO:0007669"/>
    <property type="project" value="UniProtKB-UniRule"/>
</dbReference>
<dbReference type="CDD" id="cd06199">
    <property type="entry name" value="SiR"/>
    <property type="match status" value="1"/>
</dbReference>
<dbReference type="FunFam" id="3.40.50.80:FF:000001">
    <property type="entry name" value="NADPH--cytochrome P450 reductase 1"/>
    <property type="match status" value="1"/>
</dbReference>
<dbReference type="FunFam" id="1.20.990.10:FF:000004">
    <property type="entry name" value="Sulfite reductase [NADPH] flavoprotein alpha-component"/>
    <property type="match status" value="1"/>
</dbReference>
<dbReference type="FunFam" id="3.40.50.360:FF:000018">
    <property type="entry name" value="Sulfite reductase [NADPH] flavoprotein alpha-component"/>
    <property type="match status" value="1"/>
</dbReference>
<dbReference type="Gene3D" id="3.40.50.360">
    <property type="match status" value="1"/>
</dbReference>
<dbReference type="Gene3D" id="1.20.990.10">
    <property type="entry name" value="NADPH-cytochrome p450 Reductase, Chain A, domain 3"/>
    <property type="match status" value="1"/>
</dbReference>
<dbReference type="Gene3D" id="3.40.50.80">
    <property type="entry name" value="Nucleotide-binding domain of ferredoxin-NADP reductase (FNR) module"/>
    <property type="match status" value="1"/>
</dbReference>
<dbReference type="Gene3D" id="2.40.30.10">
    <property type="entry name" value="Translation factors"/>
    <property type="match status" value="1"/>
</dbReference>
<dbReference type="HAMAP" id="MF_01541">
    <property type="entry name" value="CysJ"/>
    <property type="match status" value="1"/>
</dbReference>
<dbReference type="InterPro" id="IPR010199">
    <property type="entry name" value="CysJ"/>
</dbReference>
<dbReference type="InterPro" id="IPR003097">
    <property type="entry name" value="CysJ-like_FAD-binding"/>
</dbReference>
<dbReference type="InterPro" id="IPR029758">
    <property type="entry name" value="CysJ_Proteobact"/>
</dbReference>
<dbReference type="InterPro" id="IPR017927">
    <property type="entry name" value="FAD-bd_FR_type"/>
</dbReference>
<dbReference type="InterPro" id="IPR001094">
    <property type="entry name" value="Flavdoxin-like"/>
</dbReference>
<dbReference type="InterPro" id="IPR008254">
    <property type="entry name" value="Flavodoxin/NO_synth"/>
</dbReference>
<dbReference type="InterPro" id="IPR001709">
    <property type="entry name" value="Flavoprot_Pyr_Nucl_cyt_Rdtase"/>
</dbReference>
<dbReference type="InterPro" id="IPR029039">
    <property type="entry name" value="Flavoprotein-like_sf"/>
</dbReference>
<dbReference type="InterPro" id="IPR039261">
    <property type="entry name" value="FNR_nucleotide-bd"/>
</dbReference>
<dbReference type="InterPro" id="IPR023173">
    <property type="entry name" value="NADPH_Cyt_P450_Rdtase_alpha"/>
</dbReference>
<dbReference type="InterPro" id="IPR001433">
    <property type="entry name" value="OxRdtase_FAD/NAD-bd"/>
</dbReference>
<dbReference type="InterPro" id="IPR017938">
    <property type="entry name" value="Riboflavin_synthase-like_b-brl"/>
</dbReference>
<dbReference type="NCBIfam" id="TIGR01931">
    <property type="entry name" value="cysJ"/>
    <property type="match status" value="1"/>
</dbReference>
<dbReference type="NCBIfam" id="NF004859">
    <property type="entry name" value="PRK06214.1"/>
    <property type="match status" value="1"/>
</dbReference>
<dbReference type="NCBIfam" id="NF008197">
    <property type="entry name" value="PRK10953.1"/>
    <property type="match status" value="1"/>
</dbReference>
<dbReference type="PANTHER" id="PTHR19384:SF128">
    <property type="entry name" value="NADPH OXIDOREDUCTASE A"/>
    <property type="match status" value="1"/>
</dbReference>
<dbReference type="PANTHER" id="PTHR19384">
    <property type="entry name" value="NITRIC OXIDE SYNTHASE-RELATED"/>
    <property type="match status" value="1"/>
</dbReference>
<dbReference type="Pfam" id="PF00667">
    <property type="entry name" value="FAD_binding_1"/>
    <property type="match status" value="1"/>
</dbReference>
<dbReference type="Pfam" id="PF00258">
    <property type="entry name" value="Flavodoxin_1"/>
    <property type="match status" value="1"/>
</dbReference>
<dbReference type="Pfam" id="PF00175">
    <property type="entry name" value="NAD_binding_1"/>
    <property type="match status" value="1"/>
</dbReference>
<dbReference type="PIRSF" id="PIRSF000207">
    <property type="entry name" value="SiR-FP_CysJ"/>
    <property type="match status" value="1"/>
</dbReference>
<dbReference type="PRINTS" id="PR00369">
    <property type="entry name" value="FLAVODOXIN"/>
</dbReference>
<dbReference type="PRINTS" id="PR00371">
    <property type="entry name" value="FPNCR"/>
</dbReference>
<dbReference type="SUPFAM" id="SSF52343">
    <property type="entry name" value="Ferredoxin reductase-like, C-terminal NADP-linked domain"/>
    <property type="match status" value="1"/>
</dbReference>
<dbReference type="SUPFAM" id="SSF52218">
    <property type="entry name" value="Flavoproteins"/>
    <property type="match status" value="1"/>
</dbReference>
<dbReference type="SUPFAM" id="SSF63380">
    <property type="entry name" value="Riboflavin synthase domain-like"/>
    <property type="match status" value="1"/>
</dbReference>
<dbReference type="PROSITE" id="PS51384">
    <property type="entry name" value="FAD_FR"/>
    <property type="match status" value="1"/>
</dbReference>
<dbReference type="PROSITE" id="PS50902">
    <property type="entry name" value="FLAVODOXIN_LIKE"/>
    <property type="match status" value="1"/>
</dbReference>
<evidence type="ECO:0000250" key="1"/>
<evidence type="ECO:0000255" key="2">
    <source>
        <dbReference type="HAMAP-Rule" id="MF_01541"/>
    </source>
</evidence>
<accession>Q83QD9</accession>
<accession>Q7C087</accession>